<feature type="chain" id="PRO_0000222386" description="Early 31 kDa protein">
    <location>
        <begin position="1"/>
        <end position="261"/>
    </location>
</feature>
<feature type="region of interest" description="Disordered" evidence="1">
    <location>
        <begin position="230"/>
        <end position="261"/>
    </location>
</feature>
<feature type="compositionally biased region" description="Acidic residues" evidence="1">
    <location>
        <begin position="236"/>
        <end position="261"/>
    </location>
</feature>
<feature type="sequence conflict" description="In Ref. 2; AAT09684." evidence="2" ref="2">
    <original>EM</original>
    <variation>GKW</variation>
    <location>
        <begin position="112"/>
        <end position="113"/>
    </location>
</feature>
<reference key="1">
    <citation type="journal article" date="1990" name="Nucleic Acids Res.">
        <title>The nucleotide sequence of a delayed early gene (31K) of frog virus 3.</title>
        <authorList>
            <person name="Schmitt M.P."/>
            <person name="Tondre L."/>
            <person name="Kirn A."/>
            <person name="Aubertin A.M."/>
        </authorList>
    </citation>
    <scope>NUCLEOTIDE SEQUENCE [GENOMIC DNA]</scope>
</reference>
<reference key="2">
    <citation type="journal article" date="2004" name="Virology">
        <title>Comparative genomic analyses of frog virus 3, type species of the genus Ranavirus (family Iridoviridae).</title>
        <authorList>
            <person name="Tan W.G."/>
            <person name="Barkman T.J."/>
            <person name="Gregory Chinchar V."/>
            <person name="Essani K."/>
        </authorList>
    </citation>
    <scope>NUCLEOTIDE SEQUENCE [GENOMIC DNA]</scope>
</reference>
<sequence length="261" mass="29522">MDPTSFDKTKLCFGKPTKFSKVAGAHIINIRYEDKVTKAKVPLSFHTPILFSFGAKTSSFQDGDDNWSMSLMCYDTNKGPSPQETAFIKALEAIECRVKKHLKDKDVKKATEMYQDPLIDMMSMFYRKMEDGVVVPDRAPALYPKLLKSKNNPGQVATGFYKFVRGKEVKIPVVKEKCRVLCDLAIDSIFLGAKPSIQIKLVDVFLVELIGERKKTLKLSKLPSAVQAEINKYSADTDEEEEEEEDNAEDTEEEEEEEADQ</sequence>
<organism>
    <name type="scientific">Frog virus 3 (isolate Goorha)</name>
    <name type="common">FV-3</name>
    <dbReference type="NCBI Taxonomy" id="654924"/>
    <lineage>
        <taxon>Viruses</taxon>
        <taxon>Varidnaviria</taxon>
        <taxon>Bamfordvirae</taxon>
        <taxon>Nucleocytoviricota</taxon>
        <taxon>Megaviricetes</taxon>
        <taxon>Pimascovirales</taxon>
        <taxon>Iridoviridae</taxon>
        <taxon>Alphairidovirinae</taxon>
        <taxon>Ranavirus</taxon>
        <taxon>Frog virus 3</taxon>
    </lineage>
</organism>
<keyword id="KW-0244">Early protein</keyword>
<keyword id="KW-1185">Reference proteome</keyword>
<proteinExistence type="predicted"/>
<evidence type="ECO:0000256" key="1">
    <source>
        <dbReference type="SAM" id="MobiDB-lite"/>
    </source>
</evidence>
<evidence type="ECO:0000305" key="2"/>
<name>VP31_FRG3G</name>
<accession>P18178</accession>
<accession>Q6GZV0</accession>
<protein>
    <recommendedName>
        <fullName>Early 31 kDa protein</fullName>
    </recommendedName>
    <alternativeName>
        <fullName>P31K</fullName>
    </alternativeName>
</protein>
<dbReference type="EMBL" id="X52986">
    <property type="protein sequence ID" value="CAA37177.1"/>
    <property type="molecule type" value="Genomic_DNA"/>
</dbReference>
<dbReference type="EMBL" id="AY548484">
    <property type="protein sequence ID" value="AAT09684.1"/>
    <property type="molecule type" value="Genomic_DNA"/>
</dbReference>
<dbReference type="PIR" id="S10321">
    <property type="entry name" value="S10321"/>
</dbReference>
<dbReference type="RefSeq" id="YP_031603.1">
    <property type="nucleotide sequence ID" value="NC_005946.1"/>
</dbReference>
<dbReference type="GeneID" id="2947745"/>
<dbReference type="KEGG" id="vg:2947745"/>
<dbReference type="Proteomes" id="UP000008770">
    <property type="component" value="Segment"/>
</dbReference>
<dbReference type="InterPro" id="IPR024416">
    <property type="entry name" value="DUF2738"/>
</dbReference>
<dbReference type="Pfam" id="PF10927">
    <property type="entry name" value="DUF2738"/>
    <property type="match status" value="1"/>
</dbReference>
<organismHost>
    <name type="scientific">Dryophytes versicolor</name>
    <name type="common">chameleon treefrog</name>
    <dbReference type="NCBI Taxonomy" id="30343"/>
</organismHost>
<organismHost>
    <name type="scientific">Lithobates pipiens</name>
    <name type="common">Northern leopard frog</name>
    <name type="synonym">Rana pipiens</name>
    <dbReference type="NCBI Taxonomy" id="8404"/>
</organismHost>
<organismHost>
    <name type="scientific">Lithobates sylvaticus</name>
    <name type="common">Wood frog</name>
    <name type="synonym">Rana sylvatica</name>
    <dbReference type="NCBI Taxonomy" id="45438"/>
</organismHost>
<organismHost>
    <name type="scientific">Notophthalmus viridescens</name>
    <name type="common">Eastern newt</name>
    <name type="synonym">Triturus viridescens</name>
    <dbReference type="NCBI Taxonomy" id="8316"/>
</organismHost>